<proteinExistence type="inferred from homology"/>
<organism>
    <name type="scientific">Mycobacterium leprae (strain TN)</name>
    <dbReference type="NCBI Taxonomy" id="272631"/>
    <lineage>
        <taxon>Bacteria</taxon>
        <taxon>Bacillati</taxon>
        <taxon>Actinomycetota</taxon>
        <taxon>Actinomycetes</taxon>
        <taxon>Mycobacteriales</taxon>
        <taxon>Mycobacteriaceae</taxon>
        <taxon>Mycobacterium</taxon>
    </lineage>
</organism>
<keyword id="KW-0963">Cytoplasm</keyword>
<keyword id="KW-0489">Methyltransferase</keyword>
<keyword id="KW-1185">Reference proteome</keyword>
<keyword id="KW-0694">RNA-binding</keyword>
<keyword id="KW-0698">rRNA processing</keyword>
<keyword id="KW-0949">S-adenosyl-L-methionine</keyword>
<keyword id="KW-0808">Transferase</keyword>
<protein>
    <recommendedName>
        <fullName evidence="1">Ribosomal RNA small subunit methyltransferase A</fullName>
        <ecNumber evidence="1">2.1.1.182</ecNumber>
    </recommendedName>
    <alternativeName>
        <fullName evidence="1">16S rRNA (adenine(1518)-N(6)/adenine(1519)-N(6))-dimethyltransferase</fullName>
    </alternativeName>
    <alternativeName>
        <fullName evidence="1">16S rRNA dimethyladenosine transferase</fullName>
    </alternativeName>
    <alternativeName>
        <fullName evidence="1">16S rRNA dimethylase</fullName>
    </alternativeName>
    <alternativeName>
        <fullName evidence="1">S-adenosylmethionine-6-N', N'-adenosyl(rRNA) dimethyltransferase</fullName>
    </alternativeName>
</protein>
<sequence length="306" mass="33917">MQRKSGCTLTIRLLERTEIRWLVKELECRPRKSLGQNFVHDANTVRRVVSTSRVNRSDFVLEVGPGFGSLTLALLDCGAAVSAIEIDPVLAGRLPQTVAEHSNNEIHRLTVCNRDVLSFRRGDLATEPTALVANLPYNVAVPALLHLLAEFPSIRTVTVMVQAEVAERLAAEPGGKDYGVPSVKLSFFGRVRRCGMVSPTVFWPIPRVYSGLVRVDRYATSPWPTDDAFRRQVFELVDIAFTQRRKTSRNAFVKWAGSSNESANRLLAASIDPARRGETLSIDDFVRLLRRSDGRDDAAVRSASAS</sequence>
<name>RSMA_MYCLE</name>
<accession>Q9CD52</accession>
<reference key="1">
    <citation type="journal article" date="2001" name="Nature">
        <title>Massive gene decay in the leprosy bacillus.</title>
        <authorList>
            <person name="Cole S.T."/>
            <person name="Eiglmeier K."/>
            <person name="Parkhill J."/>
            <person name="James K.D."/>
            <person name="Thomson N.R."/>
            <person name="Wheeler P.R."/>
            <person name="Honore N."/>
            <person name="Garnier T."/>
            <person name="Churcher C.M."/>
            <person name="Harris D.E."/>
            <person name="Mungall K.L."/>
            <person name="Basham D."/>
            <person name="Brown D."/>
            <person name="Chillingworth T."/>
            <person name="Connor R."/>
            <person name="Davies R.M."/>
            <person name="Devlin K."/>
            <person name="Duthoy S."/>
            <person name="Feltwell T."/>
            <person name="Fraser A."/>
            <person name="Hamlin N."/>
            <person name="Holroyd S."/>
            <person name="Hornsby T."/>
            <person name="Jagels K."/>
            <person name="Lacroix C."/>
            <person name="Maclean J."/>
            <person name="Moule S."/>
            <person name="Murphy L.D."/>
            <person name="Oliver K."/>
            <person name="Quail M.A."/>
            <person name="Rajandream M.A."/>
            <person name="Rutherford K.M."/>
            <person name="Rutter S."/>
            <person name="Seeger K."/>
            <person name="Simon S."/>
            <person name="Simmonds M."/>
            <person name="Skelton J."/>
            <person name="Squares R."/>
            <person name="Squares S."/>
            <person name="Stevens K."/>
            <person name="Taylor K."/>
            <person name="Whitehead S."/>
            <person name="Woodward J.R."/>
            <person name="Barrell B.G."/>
        </authorList>
    </citation>
    <scope>NUCLEOTIDE SEQUENCE [LARGE SCALE GENOMIC DNA]</scope>
    <source>
        <strain>TN</strain>
    </source>
</reference>
<evidence type="ECO:0000255" key="1">
    <source>
        <dbReference type="HAMAP-Rule" id="MF_00607"/>
    </source>
</evidence>
<feature type="chain" id="PRO_0000101567" description="Ribosomal RNA small subunit methyltransferase A">
    <location>
        <begin position="1"/>
        <end position="306"/>
    </location>
</feature>
<feature type="binding site" evidence="1">
    <location>
        <position position="37"/>
    </location>
    <ligand>
        <name>S-adenosyl-L-methionine</name>
        <dbReference type="ChEBI" id="CHEBI:59789"/>
    </ligand>
</feature>
<feature type="binding site" evidence="1">
    <location>
        <position position="39"/>
    </location>
    <ligand>
        <name>S-adenosyl-L-methionine</name>
        <dbReference type="ChEBI" id="CHEBI:59789"/>
    </ligand>
</feature>
<feature type="binding site" evidence="1">
    <location>
        <position position="64"/>
    </location>
    <ligand>
        <name>S-adenosyl-L-methionine</name>
        <dbReference type="ChEBI" id="CHEBI:59789"/>
    </ligand>
</feature>
<feature type="binding site" evidence="1">
    <location>
        <position position="85"/>
    </location>
    <ligand>
        <name>S-adenosyl-L-methionine</name>
        <dbReference type="ChEBI" id="CHEBI:59789"/>
    </ligand>
</feature>
<feature type="binding site" evidence="1">
    <location>
        <position position="115"/>
    </location>
    <ligand>
        <name>S-adenosyl-L-methionine</name>
        <dbReference type="ChEBI" id="CHEBI:59789"/>
    </ligand>
</feature>
<feature type="binding site" evidence="1">
    <location>
        <position position="134"/>
    </location>
    <ligand>
        <name>S-adenosyl-L-methionine</name>
        <dbReference type="ChEBI" id="CHEBI:59789"/>
    </ligand>
</feature>
<comment type="function">
    <text evidence="1">Specifically dimethylates two adjacent adenosines (A1518 and A1519) in the loop of a conserved hairpin near the 3'-end of 16S rRNA in the 30S particle. May play a critical role in biogenesis of 30S subunits.</text>
</comment>
<comment type="catalytic activity">
    <reaction evidence="1">
        <text>adenosine(1518)/adenosine(1519) in 16S rRNA + 4 S-adenosyl-L-methionine = N(6)-dimethyladenosine(1518)/N(6)-dimethyladenosine(1519) in 16S rRNA + 4 S-adenosyl-L-homocysteine + 4 H(+)</text>
        <dbReference type="Rhea" id="RHEA:19609"/>
        <dbReference type="Rhea" id="RHEA-COMP:10232"/>
        <dbReference type="Rhea" id="RHEA-COMP:10233"/>
        <dbReference type="ChEBI" id="CHEBI:15378"/>
        <dbReference type="ChEBI" id="CHEBI:57856"/>
        <dbReference type="ChEBI" id="CHEBI:59789"/>
        <dbReference type="ChEBI" id="CHEBI:74411"/>
        <dbReference type="ChEBI" id="CHEBI:74493"/>
        <dbReference type="EC" id="2.1.1.182"/>
    </reaction>
</comment>
<comment type="subcellular location">
    <subcellularLocation>
        <location evidence="1">Cytoplasm</location>
    </subcellularLocation>
</comment>
<comment type="similarity">
    <text evidence="1">Belongs to the class I-like SAM-binding methyltransferase superfamily. rRNA adenine N(6)-methyltransferase family. RsmA subfamily.</text>
</comment>
<dbReference type="EC" id="2.1.1.182" evidence="1"/>
<dbReference type="EMBL" id="AL583917">
    <property type="protein sequence ID" value="CAC29749.1"/>
    <property type="molecule type" value="Genomic_DNA"/>
</dbReference>
<dbReference type="PIR" id="A86939">
    <property type="entry name" value="A86939"/>
</dbReference>
<dbReference type="RefSeq" id="NP_301300.1">
    <property type="nucleotide sequence ID" value="NC_002677.1"/>
</dbReference>
<dbReference type="RefSeq" id="WP_010907624.1">
    <property type="nucleotide sequence ID" value="NC_002677.1"/>
</dbReference>
<dbReference type="SMR" id="Q9CD52"/>
<dbReference type="STRING" id="272631.gene:17574058"/>
<dbReference type="KEGG" id="mle:ML0241"/>
<dbReference type="PATRIC" id="fig|272631.5.peg.375"/>
<dbReference type="Leproma" id="ML0241"/>
<dbReference type="eggNOG" id="COG0030">
    <property type="taxonomic scope" value="Bacteria"/>
</dbReference>
<dbReference type="HOGENOM" id="CLU_041220_1_1_11"/>
<dbReference type="OrthoDB" id="9814755at2"/>
<dbReference type="Proteomes" id="UP000000806">
    <property type="component" value="Chromosome"/>
</dbReference>
<dbReference type="GO" id="GO:0005829">
    <property type="term" value="C:cytosol"/>
    <property type="evidence" value="ECO:0007669"/>
    <property type="project" value="TreeGrafter"/>
</dbReference>
<dbReference type="GO" id="GO:0052908">
    <property type="term" value="F:16S rRNA (adenine(1518)-N(6)/adenine(1519)-N(6))-dimethyltransferase activity"/>
    <property type="evidence" value="ECO:0007669"/>
    <property type="project" value="UniProtKB-EC"/>
</dbReference>
<dbReference type="GO" id="GO:0003723">
    <property type="term" value="F:RNA binding"/>
    <property type="evidence" value="ECO:0007669"/>
    <property type="project" value="UniProtKB-KW"/>
</dbReference>
<dbReference type="CDD" id="cd02440">
    <property type="entry name" value="AdoMet_MTases"/>
    <property type="match status" value="1"/>
</dbReference>
<dbReference type="FunFam" id="1.10.8.100:FF:000003">
    <property type="entry name" value="Ribosomal RNA small subunit methyltransferase A"/>
    <property type="match status" value="1"/>
</dbReference>
<dbReference type="FunFam" id="3.40.50.150:FF:000023">
    <property type="entry name" value="Ribosomal RNA small subunit methyltransferase A"/>
    <property type="match status" value="1"/>
</dbReference>
<dbReference type="Gene3D" id="1.10.8.100">
    <property type="entry name" value="Ribosomal RNA adenine dimethylase-like, domain 2"/>
    <property type="match status" value="1"/>
</dbReference>
<dbReference type="Gene3D" id="3.40.50.150">
    <property type="entry name" value="Vaccinia Virus protein VP39"/>
    <property type="match status" value="1"/>
</dbReference>
<dbReference type="HAMAP" id="MF_00607">
    <property type="entry name" value="16SrRNA_methyltr_A"/>
    <property type="match status" value="1"/>
</dbReference>
<dbReference type="InterPro" id="IPR001737">
    <property type="entry name" value="KsgA/Erm"/>
</dbReference>
<dbReference type="InterPro" id="IPR023165">
    <property type="entry name" value="rRNA_Ade_diMease-like_C"/>
</dbReference>
<dbReference type="InterPro" id="IPR020596">
    <property type="entry name" value="rRNA_Ade_Mease_Trfase_CS"/>
</dbReference>
<dbReference type="InterPro" id="IPR020598">
    <property type="entry name" value="rRNA_Ade_methylase_Trfase_N"/>
</dbReference>
<dbReference type="InterPro" id="IPR011530">
    <property type="entry name" value="rRNA_adenine_dimethylase"/>
</dbReference>
<dbReference type="InterPro" id="IPR029063">
    <property type="entry name" value="SAM-dependent_MTases_sf"/>
</dbReference>
<dbReference type="NCBIfam" id="TIGR00755">
    <property type="entry name" value="ksgA"/>
    <property type="match status" value="1"/>
</dbReference>
<dbReference type="PANTHER" id="PTHR11727">
    <property type="entry name" value="DIMETHYLADENOSINE TRANSFERASE"/>
    <property type="match status" value="1"/>
</dbReference>
<dbReference type="PANTHER" id="PTHR11727:SF7">
    <property type="entry name" value="DIMETHYLADENOSINE TRANSFERASE-RELATED"/>
    <property type="match status" value="1"/>
</dbReference>
<dbReference type="Pfam" id="PF00398">
    <property type="entry name" value="RrnaAD"/>
    <property type="match status" value="1"/>
</dbReference>
<dbReference type="SMART" id="SM00650">
    <property type="entry name" value="rADc"/>
    <property type="match status" value="1"/>
</dbReference>
<dbReference type="SUPFAM" id="SSF53335">
    <property type="entry name" value="S-adenosyl-L-methionine-dependent methyltransferases"/>
    <property type="match status" value="1"/>
</dbReference>
<dbReference type="PROSITE" id="PS01131">
    <property type="entry name" value="RRNA_A_DIMETH"/>
    <property type="match status" value="1"/>
</dbReference>
<dbReference type="PROSITE" id="PS51689">
    <property type="entry name" value="SAM_RNA_A_N6_MT"/>
    <property type="match status" value="1"/>
</dbReference>
<gene>
    <name evidence="1" type="primary">rsmA</name>
    <name evidence="1" type="synonym">ksgA</name>
    <name type="ordered locus">ML0241</name>
</gene>